<gene>
    <name evidence="1" type="primary">groEL</name>
    <name evidence="1" type="synonym">groL</name>
</gene>
<comment type="function">
    <text evidence="1">Together with its co-chaperonin GroES, plays an essential role in assisting protein folding. The GroEL-GroES system forms a nano-cage that allows encapsulation of the non-native substrate proteins and provides a physical environment optimized to promote and accelerate protein folding.</text>
</comment>
<comment type="catalytic activity">
    <reaction evidence="1">
        <text>ATP + H2O + a folded polypeptide = ADP + phosphate + an unfolded polypeptide.</text>
        <dbReference type="EC" id="5.6.1.7"/>
    </reaction>
</comment>
<comment type="subunit">
    <text evidence="1">Forms a cylinder of 14 subunits composed of two heptameric rings stacked back-to-back. Interacts with the co-chaperonin GroES.</text>
</comment>
<comment type="subcellular location">
    <subcellularLocation>
        <location evidence="1">Cytoplasm</location>
    </subcellularLocation>
</comment>
<comment type="similarity">
    <text evidence="1">Belongs to the chaperonin (HSP60) family.</text>
</comment>
<sequence length="549" mass="57690">MAAKDVLFGNDARVKMLRGVNILADAVKVTLGPKGRNVVIDKSFGGPIITKDGVTVAKEIELEDKFENMGAQMVKEVASKANDEAGDGTTTATVLAQAIVNEGLKSIAAGMNPMDLKRGIDKAVIAAVEALKESSTPVTDNKAIEQVGTISANSDETVGKIIATAMEKVGTEGVITVEEGQALTDELDVVEGMQFDRGYLSPYFINKQENGTVELENPFILLVDKKISNIRELLTTLEGVAKAGKPLLIIAEDVEGEALATLVVNNMRGIVKVAAVKAPGFGDRRKAMLQDVATLTAGTVISEEIGMELEKVTLEDLGQAKRVVISKDTTIIIDGIGVEADIQARVSQIRGQIEDSSSDYDKEKLQERLAKLAGGVAVIKIGAATEMEMKEKKSRVEDALHATRAAVEEGVVAGGGVALIRAADAIKDLEGANEDQTHGINVAIRAMEAPLRQIVANCGDEPSVVLNEVRNGKGNYGYNAGNSTYGDMIEMGILDPTKVTRSALQFAASVAGLMLTTEAMITDAPVKDAGGMPDMSGMGGGMGGMGGMM</sequence>
<organism>
    <name type="scientific">Colwellia maris</name>
    <dbReference type="NCBI Taxonomy" id="77524"/>
    <lineage>
        <taxon>Bacteria</taxon>
        <taxon>Pseudomonadati</taxon>
        <taxon>Pseudomonadota</taxon>
        <taxon>Gammaproteobacteria</taxon>
        <taxon>Alteromonadales</taxon>
        <taxon>Colwelliaceae</taxon>
        <taxon>Colwellia</taxon>
    </lineage>
</organism>
<proteinExistence type="inferred from homology"/>
<reference key="1">
    <citation type="journal article" date="2003" name="Arch. Microbiol.">
        <title>Gene structure and transcriptional regulation specific to the groESL operon from the psychrophilic bacterium Colwellia maris.</title>
        <authorList>
            <person name="Yamauchi S."/>
            <person name="Okuyama H."/>
            <person name="Morita E.H."/>
            <person name="Hayashi H."/>
        </authorList>
    </citation>
    <scope>NUCLEOTIDE SEQUENCE [GENOMIC DNA]</scope>
</reference>
<dbReference type="EC" id="5.6.1.7" evidence="1"/>
<dbReference type="EMBL" id="AB073221">
    <property type="protein sequence ID" value="BAB70476.2"/>
    <property type="molecule type" value="Genomic_DNA"/>
</dbReference>
<dbReference type="SMR" id="Q93GT8"/>
<dbReference type="GO" id="GO:0005737">
    <property type="term" value="C:cytoplasm"/>
    <property type="evidence" value="ECO:0007669"/>
    <property type="project" value="UniProtKB-SubCell"/>
</dbReference>
<dbReference type="GO" id="GO:0005524">
    <property type="term" value="F:ATP binding"/>
    <property type="evidence" value="ECO:0007669"/>
    <property type="project" value="UniProtKB-UniRule"/>
</dbReference>
<dbReference type="GO" id="GO:0140662">
    <property type="term" value="F:ATP-dependent protein folding chaperone"/>
    <property type="evidence" value="ECO:0007669"/>
    <property type="project" value="InterPro"/>
</dbReference>
<dbReference type="GO" id="GO:0016853">
    <property type="term" value="F:isomerase activity"/>
    <property type="evidence" value="ECO:0007669"/>
    <property type="project" value="UniProtKB-KW"/>
</dbReference>
<dbReference type="GO" id="GO:0051082">
    <property type="term" value="F:unfolded protein binding"/>
    <property type="evidence" value="ECO:0007669"/>
    <property type="project" value="UniProtKB-UniRule"/>
</dbReference>
<dbReference type="GO" id="GO:0042026">
    <property type="term" value="P:protein refolding"/>
    <property type="evidence" value="ECO:0007669"/>
    <property type="project" value="UniProtKB-UniRule"/>
</dbReference>
<dbReference type="CDD" id="cd03344">
    <property type="entry name" value="GroEL"/>
    <property type="match status" value="1"/>
</dbReference>
<dbReference type="FunFam" id="1.10.560.10:FF:000001">
    <property type="entry name" value="60 kDa chaperonin"/>
    <property type="match status" value="1"/>
</dbReference>
<dbReference type="FunFam" id="3.50.7.10:FF:000001">
    <property type="entry name" value="60 kDa chaperonin"/>
    <property type="match status" value="1"/>
</dbReference>
<dbReference type="Gene3D" id="3.50.7.10">
    <property type="entry name" value="GroEL"/>
    <property type="match status" value="1"/>
</dbReference>
<dbReference type="Gene3D" id="1.10.560.10">
    <property type="entry name" value="GroEL-like equatorial domain"/>
    <property type="match status" value="1"/>
</dbReference>
<dbReference type="Gene3D" id="3.30.260.10">
    <property type="entry name" value="TCP-1-like chaperonin intermediate domain"/>
    <property type="match status" value="1"/>
</dbReference>
<dbReference type="HAMAP" id="MF_00600">
    <property type="entry name" value="CH60"/>
    <property type="match status" value="1"/>
</dbReference>
<dbReference type="InterPro" id="IPR018370">
    <property type="entry name" value="Chaperonin_Cpn60_CS"/>
</dbReference>
<dbReference type="InterPro" id="IPR001844">
    <property type="entry name" value="Cpn60/GroEL"/>
</dbReference>
<dbReference type="InterPro" id="IPR002423">
    <property type="entry name" value="Cpn60/GroEL/TCP-1"/>
</dbReference>
<dbReference type="InterPro" id="IPR027409">
    <property type="entry name" value="GroEL-like_apical_dom_sf"/>
</dbReference>
<dbReference type="InterPro" id="IPR027413">
    <property type="entry name" value="GROEL-like_equatorial_sf"/>
</dbReference>
<dbReference type="InterPro" id="IPR027410">
    <property type="entry name" value="TCP-1-like_intermed_sf"/>
</dbReference>
<dbReference type="NCBIfam" id="TIGR02348">
    <property type="entry name" value="GroEL"/>
    <property type="match status" value="1"/>
</dbReference>
<dbReference type="NCBIfam" id="NF000592">
    <property type="entry name" value="PRK00013.1"/>
    <property type="match status" value="1"/>
</dbReference>
<dbReference type="NCBIfam" id="NF009487">
    <property type="entry name" value="PRK12849.1"/>
    <property type="match status" value="1"/>
</dbReference>
<dbReference type="NCBIfam" id="NF009488">
    <property type="entry name" value="PRK12850.1"/>
    <property type="match status" value="1"/>
</dbReference>
<dbReference type="NCBIfam" id="NF009489">
    <property type="entry name" value="PRK12851.1"/>
    <property type="match status" value="1"/>
</dbReference>
<dbReference type="PANTHER" id="PTHR45633">
    <property type="entry name" value="60 KDA HEAT SHOCK PROTEIN, MITOCHONDRIAL"/>
    <property type="match status" value="1"/>
</dbReference>
<dbReference type="Pfam" id="PF00118">
    <property type="entry name" value="Cpn60_TCP1"/>
    <property type="match status" value="1"/>
</dbReference>
<dbReference type="PRINTS" id="PR00298">
    <property type="entry name" value="CHAPERONIN60"/>
</dbReference>
<dbReference type="SUPFAM" id="SSF52029">
    <property type="entry name" value="GroEL apical domain-like"/>
    <property type="match status" value="1"/>
</dbReference>
<dbReference type="SUPFAM" id="SSF48592">
    <property type="entry name" value="GroEL equatorial domain-like"/>
    <property type="match status" value="1"/>
</dbReference>
<dbReference type="SUPFAM" id="SSF54849">
    <property type="entry name" value="GroEL-intermediate domain like"/>
    <property type="match status" value="1"/>
</dbReference>
<dbReference type="PROSITE" id="PS00296">
    <property type="entry name" value="CHAPERONINS_CPN60"/>
    <property type="match status" value="1"/>
</dbReference>
<name>CH60_COLMA</name>
<protein>
    <recommendedName>
        <fullName evidence="1">Chaperonin GroEL</fullName>
        <ecNumber evidence="1">5.6.1.7</ecNumber>
    </recommendedName>
    <alternativeName>
        <fullName evidence="1">60 kDa chaperonin</fullName>
    </alternativeName>
    <alternativeName>
        <fullName evidence="1">Chaperonin-60</fullName>
        <shortName evidence="1">Cpn60</shortName>
    </alternativeName>
</protein>
<accession>Q93GT8</accession>
<feature type="chain" id="PRO_0000063345" description="Chaperonin GroEL">
    <location>
        <begin position="1"/>
        <end position="549"/>
    </location>
</feature>
<feature type="binding site" evidence="1">
    <location>
        <begin position="30"/>
        <end position="33"/>
    </location>
    <ligand>
        <name>ATP</name>
        <dbReference type="ChEBI" id="CHEBI:30616"/>
    </ligand>
</feature>
<feature type="binding site" evidence="1">
    <location>
        <position position="51"/>
    </location>
    <ligand>
        <name>ATP</name>
        <dbReference type="ChEBI" id="CHEBI:30616"/>
    </ligand>
</feature>
<feature type="binding site" evidence="1">
    <location>
        <begin position="87"/>
        <end position="91"/>
    </location>
    <ligand>
        <name>ATP</name>
        <dbReference type="ChEBI" id="CHEBI:30616"/>
    </ligand>
</feature>
<feature type="binding site" evidence="1">
    <location>
        <position position="415"/>
    </location>
    <ligand>
        <name>ATP</name>
        <dbReference type="ChEBI" id="CHEBI:30616"/>
    </ligand>
</feature>
<feature type="binding site" evidence="1">
    <location>
        <position position="495"/>
    </location>
    <ligand>
        <name>ATP</name>
        <dbReference type="ChEBI" id="CHEBI:30616"/>
    </ligand>
</feature>
<evidence type="ECO:0000255" key="1">
    <source>
        <dbReference type="HAMAP-Rule" id="MF_00600"/>
    </source>
</evidence>
<keyword id="KW-0067">ATP-binding</keyword>
<keyword id="KW-0143">Chaperone</keyword>
<keyword id="KW-0963">Cytoplasm</keyword>
<keyword id="KW-0413">Isomerase</keyword>
<keyword id="KW-0547">Nucleotide-binding</keyword>